<reference key="1">
    <citation type="submission" date="2008-05" db="EMBL/GenBank/DDBJ databases">
        <title>Complete sequence of Rhodopseudomonas palustris TIE-1.</title>
        <authorList>
            <consortium name="US DOE Joint Genome Institute"/>
            <person name="Lucas S."/>
            <person name="Copeland A."/>
            <person name="Lapidus A."/>
            <person name="Glavina del Rio T."/>
            <person name="Dalin E."/>
            <person name="Tice H."/>
            <person name="Pitluck S."/>
            <person name="Chain P."/>
            <person name="Malfatti S."/>
            <person name="Shin M."/>
            <person name="Vergez L."/>
            <person name="Lang D."/>
            <person name="Schmutz J."/>
            <person name="Larimer F."/>
            <person name="Land M."/>
            <person name="Hauser L."/>
            <person name="Kyrpides N."/>
            <person name="Mikhailova N."/>
            <person name="Emerson D."/>
            <person name="Newman D.K."/>
            <person name="Roden E."/>
            <person name="Richardson P."/>
        </authorList>
    </citation>
    <scope>NUCLEOTIDE SEQUENCE [LARGE SCALE GENOMIC DNA]</scope>
    <source>
        <strain>TIE-1</strain>
    </source>
</reference>
<name>PHK_RHOPT</name>
<comment type="cofactor">
    <cofactor evidence="1">
        <name>thiamine diphosphate</name>
        <dbReference type="ChEBI" id="CHEBI:58937"/>
    </cofactor>
</comment>
<comment type="similarity">
    <text evidence="1">Belongs to the XFP family.</text>
</comment>
<evidence type="ECO:0000255" key="1">
    <source>
        <dbReference type="HAMAP-Rule" id="MF_01403"/>
    </source>
</evidence>
<sequence>MPDVLSNDLLQKMDAYWRAANYLSVGQIYLQDNPLLDQKLQLDHIKPRLLGHWGTTPGLNLLYVHLNRLITEHDLDMIYITGPGHGGPGLVANAYLEGTYTERYPAIERSRNGMQRLFRQFSWPHGVPSHVSPETPGSIHEGGELGYSLAHAYGAAFDNPNLIVACVVGDGEAETGALATSWHSNKFLNPARDGAVLPILHLNGFKIANPTVLARITPQELTDLMRGYGYEPHFVEGDDPAVVHQTLAATLERVLGEIRAIQDKARNHGDTERPRWPMIVMRTPKGWTGPKQVDGKPVEGTWRAHQVPIADFKNPEHLTLLEDWMRSYRPDELFDATGKLRDELQALAPTGRRRMSANPHANGGELLEPLSLPDFHDYAVTLTGPGALKAEATRVLGTFLRDVMKNSLESENFRLFGPDETASNRLDAVLQVSPKEWMAAIEDVDVDLSPDGRVMEVLSEHLCQGWLEGYLLTGRHGFFSCYEAFIHIIDSMFNQHAKWLKACATIPWRKPIASLNYLLTSHVWRQDHNGFSHQDPGFIDHVANKKSNVVRIYLPPDANCLLSVADHCLRSRNYVNLIVAGKQPEWQWLDIDAAVRHCTTGAGIWHWASDEGEPDVVMACAGDVPTVETLAAVKLLREYVPDIKIRVVNVVDLMVLQPSSEHPHGLDDRRFDELFTTDKPVIFAFHGYPWLIHRLTYRRRNHVNIHVRGYKEEGTTTTPFDMVVLNDLDRYRLALDAILRIPRLADQRDAATSRYWATMQRHKLYIGEHGDDLPEVRDWRWSA</sequence>
<protein>
    <recommendedName>
        <fullName evidence="1">Probable phosphoketolase</fullName>
        <ecNumber evidence="1">4.1.2.-</ecNumber>
    </recommendedName>
</protein>
<gene>
    <name type="ordered locus">Rpal_1869</name>
</gene>
<accession>B3Q8J5</accession>
<keyword id="KW-0456">Lyase</keyword>
<keyword id="KW-0786">Thiamine pyrophosphate</keyword>
<organism>
    <name type="scientific">Rhodopseudomonas palustris (strain TIE-1)</name>
    <dbReference type="NCBI Taxonomy" id="395960"/>
    <lineage>
        <taxon>Bacteria</taxon>
        <taxon>Pseudomonadati</taxon>
        <taxon>Pseudomonadota</taxon>
        <taxon>Alphaproteobacteria</taxon>
        <taxon>Hyphomicrobiales</taxon>
        <taxon>Nitrobacteraceae</taxon>
        <taxon>Rhodopseudomonas</taxon>
    </lineage>
</organism>
<dbReference type="EC" id="4.1.2.-" evidence="1"/>
<dbReference type="EMBL" id="CP001096">
    <property type="protein sequence ID" value="ACF00395.1"/>
    <property type="molecule type" value="Genomic_DNA"/>
</dbReference>
<dbReference type="RefSeq" id="WP_012495246.1">
    <property type="nucleotide sequence ID" value="NC_011004.1"/>
</dbReference>
<dbReference type="SMR" id="B3Q8J5"/>
<dbReference type="KEGG" id="rpt:Rpal_1869"/>
<dbReference type="HOGENOM" id="CLU_013954_2_0_5"/>
<dbReference type="OrthoDB" id="9768449at2"/>
<dbReference type="Proteomes" id="UP000001725">
    <property type="component" value="Chromosome"/>
</dbReference>
<dbReference type="GO" id="GO:0016832">
    <property type="term" value="F:aldehyde-lyase activity"/>
    <property type="evidence" value="ECO:0007669"/>
    <property type="project" value="UniProtKB-UniRule"/>
</dbReference>
<dbReference type="GO" id="GO:0005975">
    <property type="term" value="P:carbohydrate metabolic process"/>
    <property type="evidence" value="ECO:0007669"/>
    <property type="project" value="InterPro"/>
</dbReference>
<dbReference type="CDD" id="cd02011">
    <property type="entry name" value="TPP_PK"/>
    <property type="match status" value="1"/>
</dbReference>
<dbReference type="FunFam" id="3.40.50.970:FF:000091">
    <property type="entry name" value="Xylulose-5-phosphate/fructose-6-phosphate phosphoketolase"/>
    <property type="match status" value="1"/>
</dbReference>
<dbReference type="Gene3D" id="3.40.50.920">
    <property type="match status" value="1"/>
</dbReference>
<dbReference type="Gene3D" id="3.40.50.970">
    <property type="match status" value="2"/>
</dbReference>
<dbReference type="HAMAP" id="MF_01403">
    <property type="entry name" value="Phosphoketolase"/>
    <property type="match status" value="1"/>
</dbReference>
<dbReference type="InterPro" id="IPR023962">
    <property type="entry name" value="Phosphoketolase"/>
</dbReference>
<dbReference type="InterPro" id="IPR029061">
    <property type="entry name" value="THDP-binding"/>
</dbReference>
<dbReference type="InterPro" id="IPR009014">
    <property type="entry name" value="Transketo_C/PFOR_II"/>
</dbReference>
<dbReference type="InterPro" id="IPR005593">
    <property type="entry name" value="Xul5P/Fru6P_PKetolase"/>
</dbReference>
<dbReference type="InterPro" id="IPR018969">
    <property type="entry name" value="Xul5P/Fru6P_PKetolase_C"/>
</dbReference>
<dbReference type="InterPro" id="IPR019790">
    <property type="entry name" value="Xul5P/Fru6P_PKetolase_CS"/>
</dbReference>
<dbReference type="InterPro" id="IPR018970">
    <property type="entry name" value="Xul5P/Fru6P_PKetolase_N"/>
</dbReference>
<dbReference type="InterPro" id="IPR019789">
    <property type="entry name" value="Xul5P/Fru6P_PKetolase_ThDP_BS"/>
</dbReference>
<dbReference type="NCBIfam" id="NF003616">
    <property type="entry name" value="PRK05261.1-1"/>
    <property type="match status" value="1"/>
</dbReference>
<dbReference type="NCBIfam" id="NF003617">
    <property type="entry name" value="PRK05261.1-2"/>
    <property type="match status" value="1"/>
</dbReference>
<dbReference type="NCBIfam" id="NF003619">
    <property type="entry name" value="PRK05261.1-4"/>
    <property type="match status" value="1"/>
</dbReference>
<dbReference type="NCBIfam" id="NF003621">
    <property type="entry name" value="PRK05261.1-6"/>
    <property type="match status" value="1"/>
</dbReference>
<dbReference type="PANTHER" id="PTHR31273">
    <property type="entry name" value="PHOSPHOKETOLASE-RELATED"/>
    <property type="match status" value="1"/>
</dbReference>
<dbReference type="PANTHER" id="PTHR31273:SF0">
    <property type="entry name" value="PHOSPHOKETOLASE-RELATED"/>
    <property type="match status" value="1"/>
</dbReference>
<dbReference type="Pfam" id="PF03894">
    <property type="entry name" value="XFP"/>
    <property type="match status" value="1"/>
</dbReference>
<dbReference type="Pfam" id="PF09363">
    <property type="entry name" value="XFP_C"/>
    <property type="match status" value="1"/>
</dbReference>
<dbReference type="Pfam" id="PF09364">
    <property type="entry name" value="XFP_N"/>
    <property type="match status" value="1"/>
</dbReference>
<dbReference type="PIRSF" id="PIRSF017245">
    <property type="entry name" value="Phosphoketolase"/>
    <property type="match status" value="1"/>
</dbReference>
<dbReference type="SUPFAM" id="SSF52518">
    <property type="entry name" value="Thiamin diphosphate-binding fold (THDP-binding)"/>
    <property type="match status" value="2"/>
</dbReference>
<dbReference type="PROSITE" id="PS60002">
    <property type="entry name" value="PHOSPHOKETOLASE_1"/>
    <property type="match status" value="1"/>
</dbReference>
<dbReference type="PROSITE" id="PS60003">
    <property type="entry name" value="PHOSPHOKETOLASE_2"/>
    <property type="match status" value="1"/>
</dbReference>
<feature type="chain" id="PRO_1000145459" description="Probable phosphoketolase">
    <location>
        <begin position="1"/>
        <end position="783"/>
    </location>
</feature>
<proteinExistence type="inferred from homology"/>